<keyword id="KW-0963">Cytoplasm</keyword>
<keyword id="KW-0275">Fatty acid biosynthesis</keyword>
<keyword id="KW-0276">Fatty acid metabolism</keyword>
<keyword id="KW-0444">Lipid biosynthesis</keyword>
<keyword id="KW-0443">Lipid metabolism</keyword>
<keyword id="KW-0596">Phosphopantetheine</keyword>
<keyword id="KW-0597">Phosphoprotein</keyword>
<keyword id="KW-1185">Reference proteome</keyword>
<name>ACP_BURPS</name>
<organism>
    <name type="scientific">Burkholderia pseudomallei (strain K96243)</name>
    <dbReference type="NCBI Taxonomy" id="272560"/>
    <lineage>
        <taxon>Bacteria</taxon>
        <taxon>Pseudomonadati</taxon>
        <taxon>Pseudomonadota</taxon>
        <taxon>Betaproteobacteria</taxon>
        <taxon>Burkholderiales</taxon>
        <taxon>Burkholderiaceae</taxon>
        <taxon>Burkholderia</taxon>
        <taxon>pseudomallei group</taxon>
    </lineage>
</organism>
<reference key="1">
    <citation type="journal article" date="2004" name="Proc. Natl. Acad. Sci. U.S.A.">
        <title>Genomic plasticity of the causative agent of melioidosis, Burkholderia pseudomallei.</title>
        <authorList>
            <person name="Holden M.T.G."/>
            <person name="Titball R.W."/>
            <person name="Peacock S.J."/>
            <person name="Cerdeno-Tarraga A.-M."/>
            <person name="Atkins T."/>
            <person name="Crossman L.C."/>
            <person name="Pitt T."/>
            <person name="Churcher C."/>
            <person name="Mungall K.L."/>
            <person name="Bentley S.D."/>
            <person name="Sebaihia M."/>
            <person name="Thomson N.R."/>
            <person name="Bason N."/>
            <person name="Beacham I.R."/>
            <person name="Brooks K."/>
            <person name="Brown K.A."/>
            <person name="Brown N.F."/>
            <person name="Challis G.L."/>
            <person name="Cherevach I."/>
            <person name="Chillingworth T."/>
            <person name="Cronin A."/>
            <person name="Crossett B."/>
            <person name="Davis P."/>
            <person name="DeShazer D."/>
            <person name="Feltwell T."/>
            <person name="Fraser A."/>
            <person name="Hance Z."/>
            <person name="Hauser H."/>
            <person name="Holroyd S."/>
            <person name="Jagels K."/>
            <person name="Keith K.E."/>
            <person name="Maddison M."/>
            <person name="Moule S."/>
            <person name="Price C."/>
            <person name="Quail M.A."/>
            <person name="Rabbinowitsch E."/>
            <person name="Rutherford K."/>
            <person name="Sanders M."/>
            <person name="Simmonds M."/>
            <person name="Songsivilai S."/>
            <person name="Stevens K."/>
            <person name="Tumapa S."/>
            <person name="Vesaratchavest M."/>
            <person name="Whitehead S."/>
            <person name="Yeats C."/>
            <person name="Barrell B.G."/>
            <person name="Oyston P.C.F."/>
            <person name="Parkhill J."/>
        </authorList>
    </citation>
    <scope>NUCLEOTIDE SEQUENCE [LARGE SCALE GENOMIC DNA]</scope>
    <source>
        <strain>K96243</strain>
    </source>
</reference>
<comment type="function">
    <text evidence="1">Carrier of the growing fatty acid chain in fatty acid biosynthesis.</text>
</comment>
<comment type="pathway">
    <text evidence="1">Lipid metabolism; fatty acid biosynthesis.</text>
</comment>
<comment type="subcellular location">
    <subcellularLocation>
        <location evidence="1">Cytoplasm</location>
    </subcellularLocation>
</comment>
<comment type="PTM">
    <text evidence="1">4'-phosphopantetheine is transferred from CoA to a specific serine of apo-ACP by AcpS. This modification is essential for activity because fatty acids are bound in thioester linkage to the sulfhydryl of the prosthetic group.</text>
</comment>
<comment type="similarity">
    <text evidence="1">Belongs to the acyl carrier protein (ACP) family.</text>
</comment>
<dbReference type="EMBL" id="BX571965">
    <property type="protein sequence ID" value="CAH36442.1"/>
    <property type="molecule type" value="Genomic_DNA"/>
</dbReference>
<dbReference type="RefSeq" id="WP_004197638.1">
    <property type="nucleotide sequence ID" value="NZ_CP009538.1"/>
</dbReference>
<dbReference type="RefSeq" id="YP_109031.1">
    <property type="nucleotide sequence ID" value="NC_006350.1"/>
</dbReference>
<dbReference type="SMR" id="Q63S86"/>
<dbReference type="STRING" id="272560.BPSL2439"/>
<dbReference type="GeneID" id="98102461"/>
<dbReference type="KEGG" id="bps:BPSL2439"/>
<dbReference type="PATRIC" id="fig|272560.51.peg.2951"/>
<dbReference type="eggNOG" id="COG0236">
    <property type="taxonomic scope" value="Bacteria"/>
</dbReference>
<dbReference type="UniPathway" id="UPA00094"/>
<dbReference type="PRO" id="PR:Q63S86"/>
<dbReference type="Proteomes" id="UP000000605">
    <property type="component" value="Chromosome 1"/>
</dbReference>
<dbReference type="GO" id="GO:0005829">
    <property type="term" value="C:cytosol"/>
    <property type="evidence" value="ECO:0007669"/>
    <property type="project" value="TreeGrafter"/>
</dbReference>
<dbReference type="GO" id="GO:0016020">
    <property type="term" value="C:membrane"/>
    <property type="evidence" value="ECO:0007669"/>
    <property type="project" value="GOC"/>
</dbReference>
<dbReference type="GO" id="GO:0000035">
    <property type="term" value="F:acyl binding"/>
    <property type="evidence" value="ECO:0007669"/>
    <property type="project" value="TreeGrafter"/>
</dbReference>
<dbReference type="GO" id="GO:0000036">
    <property type="term" value="F:acyl carrier activity"/>
    <property type="evidence" value="ECO:0007669"/>
    <property type="project" value="UniProtKB-UniRule"/>
</dbReference>
<dbReference type="GO" id="GO:0009245">
    <property type="term" value="P:lipid A biosynthetic process"/>
    <property type="evidence" value="ECO:0007669"/>
    <property type="project" value="TreeGrafter"/>
</dbReference>
<dbReference type="FunFam" id="1.10.1200.10:FF:000001">
    <property type="entry name" value="Acyl carrier protein"/>
    <property type="match status" value="1"/>
</dbReference>
<dbReference type="Gene3D" id="1.10.1200.10">
    <property type="entry name" value="ACP-like"/>
    <property type="match status" value="1"/>
</dbReference>
<dbReference type="HAMAP" id="MF_01217">
    <property type="entry name" value="Acyl_carrier"/>
    <property type="match status" value="1"/>
</dbReference>
<dbReference type="InterPro" id="IPR003231">
    <property type="entry name" value="ACP"/>
</dbReference>
<dbReference type="InterPro" id="IPR036736">
    <property type="entry name" value="ACP-like_sf"/>
</dbReference>
<dbReference type="InterPro" id="IPR009081">
    <property type="entry name" value="PP-bd_ACP"/>
</dbReference>
<dbReference type="InterPro" id="IPR006162">
    <property type="entry name" value="Ppantetheine_attach_site"/>
</dbReference>
<dbReference type="NCBIfam" id="TIGR00517">
    <property type="entry name" value="acyl_carrier"/>
    <property type="match status" value="1"/>
</dbReference>
<dbReference type="NCBIfam" id="NF002148">
    <property type="entry name" value="PRK00982.1-2"/>
    <property type="match status" value="1"/>
</dbReference>
<dbReference type="NCBIfam" id="NF002149">
    <property type="entry name" value="PRK00982.1-3"/>
    <property type="match status" value="1"/>
</dbReference>
<dbReference type="NCBIfam" id="NF002150">
    <property type="entry name" value="PRK00982.1-4"/>
    <property type="match status" value="1"/>
</dbReference>
<dbReference type="NCBIfam" id="NF002151">
    <property type="entry name" value="PRK00982.1-5"/>
    <property type="match status" value="1"/>
</dbReference>
<dbReference type="PANTHER" id="PTHR20863">
    <property type="entry name" value="ACYL CARRIER PROTEIN"/>
    <property type="match status" value="1"/>
</dbReference>
<dbReference type="PANTHER" id="PTHR20863:SF76">
    <property type="entry name" value="CARRIER DOMAIN-CONTAINING PROTEIN"/>
    <property type="match status" value="1"/>
</dbReference>
<dbReference type="Pfam" id="PF00550">
    <property type="entry name" value="PP-binding"/>
    <property type="match status" value="1"/>
</dbReference>
<dbReference type="SUPFAM" id="SSF47336">
    <property type="entry name" value="ACP-like"/>
    <property type="match status" value="1"/>
</dbReference>
<dbReference type="PROSITE" id="PS50075">
    <property type="entry name" value="CARRIER"/>
    <property type="match status" value="1"/>
</dbReference>
<dbReference type="PROSITE" id="PS00012">
    <property type="entry name" value="PHOSPHOPANTETHEINE"/>
    <property type="match status" value="1"/>
</dbReference>
<evidence type="ECO:0000255" key="1">
    <source>
        <dbReference type="HAMAP-Rule" id="MF_01217"/>
    </source>
</evidence>
<evidence type="ECO:0000255" key="2">
    <source>
        <dbReference type="PROSITE-ProRule" id="PRU00258"/>
    </source>
</evidence>
<proteinExistence type="inferred from homology"/>
<sequence length="79" mass="8712">MDNIEQRVKKIVAEQLGVAEAEIKNEASFVNDLGADSLDTVELVMALEDEFGMEIPDEEAEKITTVQQAIDYARANVKA</sequence>
<protein>
    <recommendedName>
        <fullName evidence="1">Acyl carrier protein</fullName>
        <shortName evidence="1">ACP</shortName>
    </recommendedName>
</protein>
<gene>
    <name evidence="1" type="primary">acpP</name>
    <name type="ordered locus">BPSL2439</name>
</gene>
<feature type="chain" id="PRO_0000180121" description="Acyl carrier protein">
    <location>
        <begin position="1"/>
        <end position="79"/>
    </location>
</feature>
<feature type="domain" description="Carrier" evidence="2">
    <location>
        <begin position="2"/>
        <end position="77"/>
    </location>
</feature>
<feature type="modified residue" description="O-(pantetheine 4'-phosphoryl)serine" evidence="2">
    <location>
        <position position="37"/>
    </location>
</feature>
<accession>Q63S86</accession>